<proteinExistence type="inferred from homology"/>
<sequence>MAKLSCSYFFILMLVFSALLMVECDEGKRCHTTIDKGNFCDLVDCRLSCFSGYNGVGKCFDDPKVPGRSNCGCLYNC</sequence>
<protein>
    <recommendedName>
        <fullName>Putative defensin-like protein 160</fullName>
    </recommendedName>
    <alternativeName>
        <fullName>Putative low-molecular-weight cysteine-rich protein 26</fullName>
        <shortName>Protein LCR26</shortName>
    </alternativeName>
</protein>
<accession>Q9M0F2</accession>
<evidence type="ECO:0000250" key="1"/>
<evidence type="ECO:0000255" key="2"/>
<evidence type="ECO:0000305" key="3"/>
<organism>
    <name type="scientific">Arabidopsis thaliana</name>
    <name type="common">Mouse-ear cress</name>
    <dbReference type="NCBI Taxonomy" id="3702"/>
    <lineage>
        <taxon>Eukaryota</taxon>
        <taxon>Viridiplantae</taxon>
        <taxon>Streptophyta</taxon>
        <taxon>Embryophyta</taxon>
        <taxon>Tracheophyta</taxon>
        <taxon>Spermatophyta</taxon>
        <taxon>Magnoliopsida</taxon>
        <taxon>eudicotyledons</taxon>
        <taxon>Gunneridae</taxon>
        <taxon>Pentapetalae</taxon>
        <taxon>rosids</taxon>
        <taxon>malvids</taxon>
        <taxon>Brassicales</taxon>
        <taxon>Brassicaceae</taxon>
        <taxon>Camelineae</taxon>
        <taxon>Arabidopsis</taxon>
    </lineage>
</organism>
<reference key="1">
    <citation type="journal article" date="1999" name="Nature">
        <title>Sequence and analysis of chromosome 4 of the plant Arabidopsis thaliana.</title>
        <authorList>
            <person name="Mayer K.F.X."/>
            <person name="Schueller C."/>
            <person name="Wambutt R."/>
            <person name="Murphy G."/>
            <person name="Volckaert G."/>
            <person name="Pohl T."/>
            <person name="Duesterhoeft A."/>
            <person name="Stiekema W."/>
            <person name="Entian K.-D."/>
            <person name="Terryn N."/>
            <person name="Harris B."/>
            <person name="Ansorge W."/>
            <person name="Brandt P."/>
            <person name="Grivell L.A."/>
            <person name="Rieger M."/>
            <person name="Weichselgartner M."/>
            <person name="de Simone V."/>
            <person name="Obermaier B."/>
            <person name="Mache R."/>
            <person name="Mueller M."/>
            <person name="Kreis M."/>
            <person name="Delseny M."/>
            <person name="Puigdomenech P."/>
            <person name="Watson M."/>
            <person name="Schmidtheini T."/>
            <person name="Reichert B."/>
            <person name="Portetelle D."/>
            <person name="Perez-Alonso M."/>
            <person name="Boutry M."/>
            <person name="Bancroft I."/>
            <person name="Vos P."/>
            <person name="Hoheisel J."/>
            <person name="Zimmermann W."/>
            <person name="Wedler H."/>
            <person name="Ridley P."/>
            <person name="Langham S.-A."/>
            <person name="McCullagh B."/>
            <person name="Bilham L."/>
            <person name="Robben J."/>
            <person name="van der Schueren J."/>
            <person name="Grymonprez B."/>
            <person name="Chuang Y.-J."/>
            <person name="Vandenbussche F."/>
            <person name="Braeken M."/>
            <person name="Weltjens I."/>
            <person name="Voet M."/>
            <person name="Bastiaens I."/>
            <person name="Aert R."/>
            <person name="Defoor E."/>
            <person name="Weitzenegger T."/>
            <person name="Bothe G."/>
            <person name="Ramsperger U."/>
            <person name="Hilbert H."/>
            <person name="Braun M."/>
            <person name="Holzer E."/>
            <person name="Brandt A."/>
            <person name="Peters S."/>
            <person name="van Staveren M."/>
            <person name="Dirkse W."/>
            <person name="Mooijman P."/>
            <person name="Klein Lankhorst R."/>
            <person name="Rose M."/>
            <person name="Hauf J."/>
            <person name="Koetter P."/>
            <person name="Berneiser S."/>
            <person name="Hempel S."/>
            <person name="Feldpausch M."/>
            <person name="Lamberth S."/>
            <person name="Van den Daele H."/>
            <person name="De Keyser A."/>
            <person name="Buysshaert C."/>
            <person name="Gielen J."/>
            <person name="Villarroel R."/>
            <person name="De Clercq R."/>
            <person name="van Montagu M."/>
            <person name="Rogers J."/>
            <person name="Cronin A."/>
            <person name="Quail M.A."/>
            <person name="Bray-Allen S."/>
            <person name="Clark L."/>
            <person name="Doggett J."/>
            <person name="Hall S."/>
            <person name="Kay M."/>
            <person name="Lennard N."/>
            <person name="McLay K."/>
            <person name="Mayes R."/>
            <person name="Pettett A."/>
            <person name="Rajandream M.A."/>
            <person name="Lyne M."/>
            <person name="Benes V."/>
            <person name="Rechmann S."/>
            <person name="Borkova D."/>
            <person name="Bloecker H."/>
            <person name="Scharfe M."/>
            <person name="Grimm M."/>
            <person name="Loehnert T.-H."/>
            <person name="Dose S."/>
            <person name="de Haan M."/>
            <person name="Maarse A.C."/>
            <person name="Schaefer M."/>
            <person name="Mueller-Auer S."/>
            <person name="Gabel C."/>
            <person name="Fuchs M."/>
            <person name="Fartmann B."/>
            <person name="Granderath K."/>
            <person name="Dauner D."/>
            <person name="Herzl A."/>
            <person name="Neumann S."/>
            <person name="Argiriou A."/>
            <person name="Vitale D."/>
            <person name="Liguori R."/>
            <person name="Piravandi E."/>
            <person name="Massenet O."/>
            <person name="Quigley F."/>
            <person name="Clabauld G."/>
            <person name="Muendlein A."/>
            <person name="Felber R."/>
            <person name="Schnabl S."/>
            <person name="Hiller R."/>
            <person name="Schmidt W."/>
            <person name="Lecharny A."/>
            <person name="Aubourg S."/>
            <person name="Chefdor F."/>
            <person name="Cooke R."/>
            <person name="Berger C."/>
            <person name="Monfort A."/>
            <person name="Casacuberta E."/>
            <person name="Gibbons T."/>
            <person name="Weber N."/>
            <person name="Vandenbol M."/>
            <person name="Bargues M."/>
            <person name="Terol J."/>
            <person name="Torres A."/>
            <person name="Perez-Perez A."/>
            <person name="Purnelle B."/>
            <person name="Bent E."/>
            <person name="Johnson S."/>
            <person name="Tacon D."/>
            <person name="Jesse T."/>
            <person name="Heijnen L."/>
            <person name="Schwarz S."/>
            <person name="Scholler P."/>
            <person name="Heber S."/>
            <person name="Francs P."/>
            <person name="Bielke C."/>
            <person name="Frishman D."/>
            <person name="Haase D."/>
            <person name="Lemcke K."/>
            <person name="Mewes H.-W."/>
            <person name="Stocker S."/>
            <person name="Zaccaria P."/>
            <person name="Bevan M."/>
            <person name="Wilson R.K."/>
            <person name="de la Bastide M."/>
            <person name="Habermann K."/>
            <person name="Parnell L."/>
            <person name="Dedhia N."/>
            <person name="Gnoj L."/>
            <person name="Schutz K."/>
            <person name="Huang E."/>
            <person name="Spiegel L."/>
            <person name="Sekhon M."/>
            <person name="Murray J."/>
            <person name="Sheet P."/>
            <person name="Cordes M."/>
            <person name="Abu-Threideh J."/>
            <person name="Stoneking T."/>
            <person name="Kalicki J."/>
            <person name="Graves T."/>
            <person name="Harmon G."/>
            <person name="Edwards J."/>
            <person name="Latreille P."/>
            <person name="Courtney L."/>
            <person name="Cloud J."/>
            <person name="Abbott A."/>
            <person name="Scott K."/>
            <person name="Johnson D."/>
            <person name="Minx P."/>
            <person name="Bentley D."/>
            <person name="Fulton B."/>
            <person name="Miller N."/>
            <person name="Greco T."/>
            <person name="Kemp K."/>
            <person name="Kramer J."/>
            <person name="Fulton L."/>
            <person name="Mardis E."/>
            <person name="Dante M."/>
            <person name="Pepin K."/>
            <person name="Hillier L.W."/>
            <person name="Nelson J."/>
            <person name="Spieth J."/>
            <person name="Ryan E."/>
            <person name="Andrews S."/>
            <person name="Geisel C."/>
            <person name="Layman D."/>
            <person name="Du H."/>
            <person name="Ali J."/>
            <person name="Berghoff A."/>
            <person name="Jones K."/>
            <person name="Drone K."/>
            <person name="Cotton M."/>
            <person name="Joshu C."/>
            <person name="Antonoiu B."/>
            <person name="Zidanic M."/>
            <person name="Strong C."/>
            <person name="Sun H."/>
            <person name="Lamar B."/>
            <person name="Yordan C."/>
            <person name="Ma P."/>
            <person name="Zhong J."/>
            <person name="Preston R."/>
            <person name="Vil D."/>
            <person name="Shekher M."/>
            <person name="Matero A."/>
            <person name="Shah R."/>
            <person name="Swaby I.K."/>
            <person name="O'Shaughnessy A."/>
            <person name="Rodriguez M."/>
            <person name="Hoffman J."/>
            <person name="Till S."/>
            <person name="Granat S."/>
            <person name="Shohdy N."/>
            <person name="Hasegawa A."/>
            <person name="Hameed A."/>
            <person name="Lodhi M."/>
            <person name="Johnson A."/>
            <person name="Chen E."/>
            <person name="Marra M.A."/>
            <person name="Martienssen R."/>
            <person name="McCombie W.R."/>
        </authorList>
    </citation>
    <scope>NUCLEOTIDE SEQUENCE [LARGE SCALE GENOMIC DNA]</scope>
    <source>
        <strain>cv. Columbia</strain>
    </source>
</reference>
<reference key="2">
    <citation type="journal article" date="2017" name="Plant J.">
        <title>Araport11: a complete reannotation of the Arabidopsis thaliana reference genome.</title>
        <authorList>
            <person name="Cheng C.Y."/>
            <person name="Krishnakumar V."/>
            <person name="Chan A.P."/>
            <person name="Thibaud-Nissen F."/>
            <person name="Schobel S."/>
            <person name="Town C.D."/>
        </authorList>
    </citation>
    <scope>GENOME REANNOTATION</scope>
    <source>
        <strain>cv. Columbia</strain>
    </source>
</reference>
<reference key="3">
    <citation type="journal article" date="2001" name="Plant Mol. Biol.">
        <title>Two large Arabidopsis thaliana gene families are homologous to the Brassica gene superfamily that encodes pollen coat proteins and the male component of the self-incompatibility response.</title>
        <authorList>
            <person name="Vanoosthuyse V."/>
            <person name="Miege C."/>
            <person name="Dumas C."/>
            <person name="Cock J.M."/>
        </authorList>
    </citation>
    <scope>IDENTIFICATION</scope>
</reference>
<reference key="4">
    <citation type="journal article" date="2005" name="Plant Physiol.">
        <title>Genome organization of more than 300 defensin-like genes in Arabidopsis.</title>
        <authorList>
            <person name="Silverstein K.A.T."/>
            <person name="Graham M.A."/>
            <person name="Paape T.D."/>
            <person name="VandenBosch K.A."/>
        </authorList>
    </citation>
    <scope>GENE FAMILY</scope>
</reference>
<feature type="signal peptide" evidence="2">
    <location>
        <begin position="1"/>
        <end position="24"/>
    </location>
</feature>
<feature type="chain" id="PRO_0000206205" description="Putative defensin-like protein 160">
    <location>
        <begin position="25"/>
        <end position="77"/>
    </location>
</feature>
<feature type="disulfide bond" evidence="1">
    <location>
        <begin position="30"/>
        <end position="77"/>
    </location>
</feature>
<feature type="disulfide bond" evidence="1">
    <location>
        <begin position="40"/>
        <end position="59"/>
    </location>
</feature>
<feature type="disulfide bond" evidence="1">
    <location>
        <begin position="45"/>
        <end position="71"/>
    </location>
</feature>
<feature type="disulfide bond" evidence="1">
    <location>
        <begin position="49"/>
        <end position="73"/>
    </location>
</feature>
<comment type="subcellular location">
    <subcellularLocation>
        <location evidence="1">Secreted</location>
    </subcellularLocation>
</comment>
<comment type="similarity">
    <text evidence="3">Belongs to the DEFL family.</text>
</comment>
<name>DF160_ARATH</name>
<dbReference type="EMBL" id="AL096692">
    <property type="status" value="NOT_ANNOTATED_CDS"/>
    <property type="molecule type" value="Genomic_DNA"/>
</dbReference>
<dbReference type="EMBL" id="AL161574">
    <property type="protein sequence ID" value="CAB79687.1"/>
    <property type="molecule type" value="Genomic_DNA"/>
</dbReference>
<dbReference type="EMBL" id="CP002687">
    <property type="protein sequence ID" value="AEE85614.1"/>
    <property type="molecule type" value="Genomic_DNA"/>
</dbReference>
<dbReference type="PIR" id="T13446">
    <property type="entry name" value="T13446"/>
</dbReference>
<dbReference type="RefSeq" id="NP_194658.2">
    <property type="nucleotide sequence ID" value="NM_119074.3"/>
</dbReference>
<dbReference type="SMR" id="Q9M0F2"/>
<dbReference type="PaxDb" id="3702-AT4G29290.1"/>
<dbReference type="EnsemblPlants" id="AT4G29290.1">
    <property type="protein sequence ID" value="AT4G29290.1"/>
    <property type="gene ID" value="AT4G29290"/>
</dbReference>
<dbReference type="GeneID" id="829051"/>
<dbReference type="Gramene" id="AT4G29290.1">
    <property type="protein sequence ID" value="AT4G29290.1"/>
    <property type="gene ID" value="AT4G29290"/>
</dbReference>
<dbReference type="KEGG" id="ath:AT4G29290"/>
<dbReference type="Araport" id="AT4G29290"/>
<dbReference type="TAIR" id="AT4G29290">
    <property type="gene designation" value="LCR26"/>
</dbReference>
<dbReference type="HOGENOM" id="CLU_182511_1_0_1"/>
<dbReference type="InParanoid" id="Q9M0F2"/>
<dbReference type="OMA" id="LLMVECD"/>
<dbReference type="OrthoDB" id="1021299at2759"/>
<dbReference type="PhylomeDB" id="Q9M0F2"/>
<dbReference type="PRO" id="PR:Q9M0F2"/>
<dbReference type="Proteomes" id="UP000006548">
    <property type="component" value="Chromosome 4"/>
</dbReference>
<dbReference type="ExpressionAtlas" id="Q9M0F2">
    <property type="expression patterns" value="baseline"/>
</dbReference>
<dbReference type="GO" id="GO:0005576">
    <property type="term" value="C:extracellular region"/>
    <property type="evidence" value="ECO:0007669"/>
    <property type="project" value="UniProtKB-SubCell"/>
</dbReference>
<dbReference type="GO" id="GO:0050832">
    <property type="term" value="P:defense response to fungus"/>
    <property type="evidence" value="ECO:0007669"/>
    <property type="project" value="UniProtKB-KW"/>
</dbReference>
<dbReference type="GO" id="GO:0031640">
    <property type="term" value="P:killing of cells of another organism"/>
    <property type="evidence" value="ECO:0007669"/>
    <property type="project" value="UniProtKB-KW"/>
</dbReference>
<dbReference type="InterPro" id="IPR010851">
    <property type="entry name" value="DEFL"/>
</dbReference>
<dbReference type="PANTHER" id="PTHR33830:SF23">
    <property type="entry name" value="DEFENSIN-LIKE PROTEIN 159-RELATED"/>
    <property type="match status" value="1"/>
</dbReference>
<dbReference type="PANTHER" id="PTHR33830">
    <property type="entry name" value="DEFENSIN-LIKE PROTEIN 184-RELATED"/>
    <property type="match status" value="1"/>
</dbReference>
<dbReference type="Pfam" id="PF07333">
    <property type="entry name" value="SLR1-BP"/>
    <property type="match status" value="1"/>
</dbReference>
<gene>
    <name type="primary">LCR26</name>
    <name type="ordered locus">At4g29290</name>
    <name type="ORF">F17A13.110</name>
</gene>
<keyword id="KW-0929">Antimicrobial</keyword>
<keyword id="KW-1015">Disulfide bond</keyword>
<keyword id="KW-0295">Fungicide</keyword>
<keyword id="KW-0611">Plant defense</keyword>
<keyword id="KW-1185">Reference proteome</keyword>
<keyword id="KW-0964">Secreted</keyword>
<keyword id="KW-0732">Signal</keyword>